<reference key="1">
    <citation type="journal article" date="2005" name="Genome Res.">
        <title>Comparative and functional genomic analyses of the pathogenicity of phytopathogen Xanthomonas campestris pv. campestris.</title>
        <authorList>
            <person name="Qian W."/>
            <person name="Jia Y."/>
            <person name="Ren S.-X."/>
            <person name="He Y.-Q."/>
            <person name="Feng J.-X."/>
            <person name="Lu L.-F."/>
            <person name="Sun Q."/>
            <person name="Ying G."/>
            <person name="Tang D.-J."/>
            <person name="Tang H."/>
            <person name="Wu W."/>
            <person name="Hao P."/>
            <person name="Wang L."/>
            <person name="Jiang B.-L."/>
            <person name="Zeng S."/>
            <person name="Gu W.-Y."/>
            <person name="Lu G."/>
            <person name="Rong L."/>
            <person name="Tian Y."/>
            <person name="Yao Z."/>
            <person name="Fu G."/>
            <person name="Chen B."/>
            <person name="Fang R."/>
            <person name="Qiang B."/>
            <person name="Chen Z."/>
            <person name="Zhao G.-P."/>
            <person name="Tang J.-L."/>
            <person name="He C."/>
        </authorList>
    </citation>
    <scope>NUCLEOTIDE SEQUENCE [LARGE SCALE GENOMIC DNA]</scope>
    <source>
        <strain>8004</strain>
    </source>
</reference>
<organism>
    <name type="scientific">Xanthomonas campestris pv. campestris (strain 8004)</name>
    <dbReference type="NCBI Taxonomy" id="314565"/>
    <lineage>
        <taxon>Bacteria</taxon>
        <taxon>Pseudomonadati</taxon>
        <taxon>Pseudomonadota</taxon>
        <taxon>Gammaproteobacteria</taxon>
        <taxon>Lysobacterales</taxon>
        <taxon>Lysobacteraceae</taxon>
        <taxon>Xanthomonas</taxon>
    </lineage>
</organism>
<dbReference type="EC" id="1.3.1.9" evidence="1"/>
<dbReference type="EMBL" id="CP000050">
    <property type="protein sequence ID" value="AAY47210.1"/>
    <property type="molecule type" value="Genomic_DNA"/>
</dbReference>
<dbReference type="RefSeq" id="WP_011035373.1">
    <property type="nucleotide sequence ID" value="NC_007086.1"/>
</dbReference>
<dbReference type="SMR" id="Q4V0G3"/>
<dbReference type="KEGG" id="xcb:XC_0119"/>
<dbReference type="HOGENOM" id="CLU_057698_1_0_6"/>
<dbReference type="UniPathway" id="UPA00094"/>
<dbReference type="Proteomes" id="UP000000420">
    <property type="component" value="Chromosome"/>
</dbReference>
<dbReference type="GO" id="GO:0004318">
    <property type="term" value="F:enoyl-[acyl-carrier-protein] reductase (NADH) activity"/>
    <property type="evidence" value="ECO:0007669"/>
    <property type="project" value="UniProtKB-UniRule"/>
</dbReference>
<dbReference type="GO" id="GO:0051287">
    <property type="term" value="F:NAD binding"/>
    <property type="evidence" value="ECO:0007669"/>
    <property type="project" value="UniProtKB-UniRule"/>
</dbReference>
<dbReference type="GO" id="GO:0050343">
    <property type="term" value="F:trans-2-enoyl-CoA reductase (NADH) activity"/>
    <property type="evidence" value="ECO:0007669"/>
    <property type="project" value="TreeGrafter"/>
</dbReference>
<dbReference type="GO" id="GO:0006633">
    <property type="term" value="P:fatty acid biosynthetic process"/>
    <property type="evidence" value="ECO:0007669"/>
    <property type="project" value="UniProtKB-UniRule"/>
</dbReference>
<dbReference type="FunFam" id="3.40.50.720:FF:000221">
    <property type="entry name" value="Enoyl-[acyl-carrier-protein] reductase [NADH]"/>
    <property type="match status" value="1"/>
</dbReference>
<dbReference type="Gene3D" id="3.40.50.720">
    <property type="entry name" value="NAD(P)-binding Rossmann-like Domain"/>
    <property type="match status" value="1"/>
</dbReference>
<dbReference type="HAMAP" id="MF_01838">
    <property type="entry name" value="FabV_reductase"/>
    <property type="match status" value="1"/>
</dbReference>
<dbReference type="InterPro" id="IPR024906">
    <property type="entry name" value="Eno_Rdtase_FAD-bd_dom"/>
</dbReference>
<dbReference type="InterPro" id="IPR024910">
    <property type="entry name" value="Enoyl-CoA_Rdtase_cat_dom"/>
</dbReference>
<dbReference type="InterPro" id="IPR050048">
    <property type="entry name" value="FabV-like_NADH_b"/>
</dbReference>
<dbReference type="InterPro" id="IPR010758">
    <property type="entry name" value="Trans-2-enoyl-CoA_reductase"/>
</dbReference>
<dbReference type="NCBIfam" id="NF043048">
    <property type="entry name" value="EnoyACPredFabV"/>
    <property type="match status" value="1"/>
</dbReference>
<dbReference type="NCBIfam" id="NF010177">
    <property type="entry name" value="PRK13656.1"/>
    <property type="match status" value="1"/>
</dbReference>
<dbReference type="PANTHER" id="PTHR37480">
    <property type="entry name" value="ENOYL-[ACYL-CARRIER-PROTEIN] REDUCTASE [NADH]"/>
    <property type="match status" value="1"/>
</dbReference>
<dbReference type="PANTHER" id="PTHR37480:SF1">
    <property type="entry name" value="ENOYL-[ACYL-CARRIER-PROTEIN] REDUCTASE [NADH]"/>
    <property type="match status" value="1"/>
</dbReference>
<dbReference type="Pfam" id="PF07055">
    <property type="entry name" value="Eno-Rase_FAD_bd"/>
    <property type="match status" value="1"/>
</dbReference>
<dbReference type="Pfam" id="PF12242">
    <property type="entry name" value="Eno-Rase_NADH_b"/>
    <property type="match status" value="1"/>
</dbReference>
<dbReference type="Pfam" id="PF12241">
    <property type="entry name" value="Enoyl_reductase"/>
    <property type="match status" value="1"/>
</dbReference>
<gene>
    <name evidence="1" type="primary">fabV</name>
    <name type="ordered locus">XC_0119</name>
</gene>
<feature type="chain" id="PRO_1000070505" description="Enoyl-[acyl-carrier-protein] reductase [NADH]">
    <location>
        <begin position="1"/>
        <end position="402"/>
    </location>
</feature>
<feature type="active site" description="Proton donor" evidence="1">
    <location>
        <position position="236"/>
    </location>
</feature>
<feature type="binding site" evidence="1">
    <location>
        <begin position="48"/>
        <end position="53"/>
    </location>
    <ligand>
        <name>NAD(+)</name>
        <dbReference type="ChEBI" id="CHEBI:57540"/>
    </ligand>
</feature>
<feature type="binding site" evidence="1">
    <location>
        <begin position="74"/>
        <end position="75"/>
    </location>
    <ligand>
        <name>NAD(+)</name>
        <dbReference type="ChEBI" id="CHEBI:57540"/>
    </ligand>
</feature>
<feature type="binding site" evidence="1">
    <location>
        <begin position="111"/>
        <end position="112"/>
    </location>
    <ligand>
        <name>NAD(+)</name>
        <dbReference type="ChEBI" id="CHEBI:57540"/>
    </ligand>
</feature>
<feature type="binding site" evidence="1">
    <location>
        <begin position="140"/>
        <end position="141"/>
    </location>
    <ligand>
        <name>NAD(+)</name>
        <dbReference type="ChEBI" id="CHEBI:57540"/>
    </ligand>
</feature>
<feature type="binding site" evidence="1">
    <location>
        <position position="226"/>
    </location>
    <ligand>
        <name>substrate</name>
    </ligand>
</feature>
<feature type="binding site" evidence="1">
    <location>
        <position position="245"/>
    </location>
    <ligand>
        <name>NAD(+)</name>
        <dbReference type="ChEBI" id="CHEBI:57540"/>
    </ligand>
</feature>
<feature type="binding site" evidence="1">
    <location>
        <begin position="274"/>
        <end position="276"/>
    </location>
    <ligand>
        <name>NAD(+)</name>
        <dbReference type="ChEBI" id="CHEBI:57540"/>
    </ligand>
</feature>
<feature type="site" description="Plays an important role in discriminating NADH against NADPH" evidence="1">
    <location>
        <position position="75"/>
    </location>
</feature>
<evidence type="ECO:0000255" key="1">
    <source>
        <dbReference type="HAMAP-Rule" id="MF_01838"/>
    </source>
</evidence>
<accession>Q4V0G3</accession>
<proteinExistence type="inferred from homology"/>
<protein>
    <recommendedName>
        <fullName evidence="1">Enoyl-[acyl-carrier-protein] reductase [NADH]</fullName>
        <shortName evidence="1">ENR</shortName>
        <ecNumber evidence="1">1.3.1.9</ecNumber>
    </recommendedName>
</protein>
<comment type="function">
    <text evidence="1">Involved in the final reduction of the elongation cycle of fatty acid synthesis (FAS II). Catalyzes the reduction of a carbon-carbon double bond in an enoyl moiety that is covalently linked to an acyl carrier protein (ACP).</text>
</comment>
<comment type="catalytic activity">
    <reaction evidence="1">
        <text>a 2,3-saturated acyl-[ACP] + NAD(+) = a (2E)-enoyl-[ACP] + NADH + H(+)</text>
        <dbReference type="Rhea" id="RHEA:10240"/>
        <dbReference type="Rhea" id="RHEA-COMP:9925"/>
        <dbReference type="Rhea" id="RHEA-COMP:9926"/>
        <dbReference type="ChEBI" id="CHEBI:15378"/>
        <dbReference type="ChEBI" id="CHEBI:57540"/>
        <dbReference type="ChEBI" id="CHEBI:57945"/>
        <dbReference type="ChEBI" id="CHEBI:78784"/>
        <dbReference type="ChEBI" id="CHEBI:78785"/>
        <dbReference type="EC" id="1.3.1.9"/>
    </reaction>
</comment>
<comment type="pathway">
    <text evidence="1">Lipid metabolism; fatty acid biosynthesis.</text>
</comment>
<comment type="subunit">
    <text evidence="1">Monomer.</text>
</comment>
<comment type="similarity">
    <text evidence="1">Belongs to the TER reductase family.</text>
</comment>
<keyword id="KW-0275">Fatty acid biosynthesis</keyword>
<keyword id="KW-0276">Fatty acid metabolism</keyword>
<keyword id="KW-0444">Lipid biosynthesis</keyword>
<keyword id="KW-0443">Lipid metabolism</keyword>
<keyword id="KW-0520">NAD</keyword>
<keyword id="KW-0560">Oxidoreductase</keyword>
<sequence length="402" mass="43959">MIIHPKVRGFICTTTHPLGCERNVLDQIAATRARGVRNDGPKKVLVIGASSGYGLASRITAAFGFGADTLGVFFEKPGSDKKAGTAGWYNSAAFDTHAKAAGLYSKSINGDAFSDEARAKVIELIKTDMGGQVDLVVYSLASPVRKLPSTGEVKRSALKPIGNTYTATAIDTNKDTIIQASIEPATEQEIEDTITVMGGQDWELWIDALDSAGVLAKGARSVAFSYIGTEITWPIYWHGALGKAKVDLDHTAQRLDARLQASGGGANVAVLKSVVTQASAAIPVMPLYISMVYKIMKEKGLHEGTIEQLDRLFRERLYREDGQPAEVDEQNRLRLDDWELRDDVQDACKALWPQVTTENLFALTDYAGYKHEFLKLFGFERKDVDYDADVDPDVKFDCIELG</sequence>
<name>FABV_XANC8</name>